<sequence>MSEKKHIMTYEGVKKLEDELEYLKTVKRKEITEKIKVALGYGDLSENSEYDEAKNEQAFTEGRIIQLENMLKNAVVVDESEISTDIVTVGSIVKVMDFDFDEEVEYSIVGSAEADPMNFKISNESPVGEGLMGKKVGDVVEIEVPGGTTKFEVLGIRR</sequence>
<reference key="1">
    <citation type="journal article" date="2006" name="Genome Res.">
        <title>Skewed genomic variability in strains of the toxigenic bacterial pathogen, Clostridium perfringens.</title>
        <authorList>
            <person name="Myers G.S.A."/>
            <person name="Rasko D.A."/>
            <person name="Cheung J.K."/>
            <person name="Ravel J."/>
            <person name="Seshadri R."/>
            <person name="DeBoy R.T."/>
            <person name="Ren Q."/>
            <person name="Varga J."/>
            <person name="Awad M.M."/>
            <person name="Brinkac L.M."/>
            <person name="Daugherty S.C."/>
            <person name="Haft D.H."/>
            <person name="Dodson R.J."/>
            <person name="Madupu R."/>
            <person name="Nelson W.C."/>
            <person name="Rosovitz M.J."/>
            <person name="Sullivan S.A."/>
            <person name="Khouri H."/>
            <person name="Dimitrov G.I."/>
            <person name="Watkins K.L."/>
            <person name="Mulligan S."/>
            <person name="Benton J."/>
            <person name="Radune D."/>
            <person name="Fisher D.J."/>
            <person name="Atkins H.S."/>
            <person name="Hiscox T."/>
            <person name="Jost B.H."/>
            <person name="Billington S.J."/>
            <person name="Songer J.G."/>
            <person name="McClane B.A."/>
            <person name="Titball R.W."/>
            <person name="Rood J.I."/>
            <person name="Melville S.B."/>
            <person name="Paulsen I.T."/>
        </authorList>
    </citation>
    <scope>NUCLEOTIDE SEQUENCE [LARGE SCALE GENOMIC DNA]</scope>
    <source>
        <strain>ATCC 13124 / DSM 756 / JCM 1290 / NCIMB 6125 / NCTC 8237 / S 107 / Type A</strain>
    </source>
</reference>
<evidence type="ECO:0000255" key="1">
    <source>
        <dbReference type="HAMAP-Rule" id="MF_00105"/>
    </source>
</evidence>
<proteinExistence type="inferred from homology"/>
<accession>Q0TMI6</accession>
<gene>
    <name evidence="1" type="primary">greA</name>
    <name type="ordered locus">CPF_2782</name>
</gene>
<comment type="function">
    <text evidence="1">Necessary for efficient RNA polymerase transcription elongation past template-encoded arresting sites. The arresting sites in DNA have the property of trapping a certain fraction of elongating RNA polymerases that pass through, resulting in locked ternary complexes. Cleavage of the nascent transcript by cleavage factors such as GreA or GreB allows the resumption of elongation from the new 3'terminus. GreA releases sequences of 2 to 3 nucleotides.</text>
</comment>
<comment type="similarity">
    <text evidence="1">Belongs to the GreA/GreB family.</text>
</comment>
<organism>
    <name type="scientific">Clostridium perfringens (strain ATCC 13124 / DSM 756 / JCM 1290 / NCIMB 6125 / NCTC 8237 / Type A)</name>
    <dbReference type="NCBI Taxonomy" id="195103"/>
    <lineage>
        <taxon>Bacteria</taxon>
        <taxon>Bacillati</taxon>
        <taxon>Bacillota</taxon>
        <taxon>Clostridia</taxon>
        <taxon>Eubacteriales</taxon>
        <taxon>Clostridiaceae</taxon>
        <taxon>Clostridium</taxon>
    </lineage>
</organism>
<dbReference type="EMBL" id="CP000246">
    <property type="protein sequence ID" value="ABG82790.1"/>
    <property type="molecule type" value="Genomic_DNA"/>
</dbReference>
<dbReference type="RefSeq" id="WP_003450338.1">
    <property type="nucleotide sequence ID" value="NC_008261.1"/>
</dbReference>
<dbReference type="SMR" id="Q0TMI6"/>
<dbReference type="STRING" id="195103.CPF_2782"/>
<dbReference type="PaxDb" id="195103-CPF_2782"/>
<dbReference type="GeneID" id="93000937"/>
<dbReference type="KEGG" id="cpf:CPF_2782"/>
<dbReference type="eggNOG" id="COG0782">
    <property type="taxonomic scope" value="Bacteria"/>
</dbReference>
<dbReference type="HOGENOM" id="CLU_101379_2_1_9"/>
<dbReference type="Proteomes" id="UP000001823">
    <property type="component" value="Chromosome"/>
</dbReference>
<dbReference type="GO" id="GO:0003677">
    <property type="term" value="F:DNA binding"/>
    <property type="evidence" value="ECO:0007669"/>
    <property type="project" value="UniProtKB-UniRule"/>
</dbReference>
<dbReference type="GO" id="GO:0070063">
    <property type="term" value="F:RNA polymerase binding"/>
    <property type="evidence" value="ECO:0007669"/>
    <property type="project" value="InterPro"/>
</dbReference>
<dbReference type="GO" id="GO:0006354">
    <property type="term" value="P:DNA-templated transcription elongation"/>
    <property type="evidence" value="ECO:0007669"/>
    <property type="project" value="TreeGrafter"/>
</dbReference>
<dbReference type="GO" id="GO:0032784">
    <property type="term" value="P:regulation of DNA-templated transcription elongation"/>
    <property type="evidence" value="ECO:0007669"/>
    <property type="project" value="UniProtKB-UniRule"/>
</dbReference>
<dbReference type="FunFam" id="1.10.287.180:FF:000001">
    <property type="entry name" value="Transcription elongation factor GreA"/>
    <property type="match status" value="1"/>
</dbReference>
<dbReference type="FunFam" id="3.10.50.30:FF:000001">
    <property type="entry name" value="Transcription elongation factor GreA"/>
    <property type="match status" value="1"/>
</dbReference>
<dbReference type="Gene3D" id="3.10.50.30">
    <property type="entry name" value="Transcription elongation factor, GreA/GreB, C-terminal domain"/>
    <property type="match status" value="1"/>
</dbReference>
<dbReference type="Gene3D" id="1.10.287.180">
    <property type="entry name" value="Transcription elongation factor, GreA/GreB, N-terminal domain"/>
    <property type="match status" value="1"/>
</dbReference>
<dbReference type="HAMAP" id="MF_00105">
    <property type="entry name" value="GreA_GreB"/>
    <property type="match status" value="1"/>
</dbReference>
<dbReference type="InterPro" id="IPR036953">
    <property type="entry name" value="GreA/GreB_C_sf"/>
</dbReference>
<dbReference type="InterPro" id="IPR018151">
    <property type="entry name" value="TF_GreA/GreB_CS"/>
</dbReference>
<dbReference type="InterPro" id="IPR006359">
    <property type="entry name" value="Tscrpt_elong_fac_GreA"/>
</dbReference>
<dbReference type="InterPro" id="IPR028624">
    <property type="entry name" value="Tscrpt_elong_fac_GreA/B"/>
</dbReference>
<dbReference type="InterPro" id="IPR001437">
    <property type="entry name" value="Tscrpt_elong_fac_GreA/B_C"/>
</dbReference>
<dbReference type="InterPro" id="IPR023459">
    <property type="entry name" value="Tscrpt_elong_fac_GreA/B_fam"/>
</dbReference>
<dbReference type="InterPro" id="IPR022691">
    <property type="entry name" value="Tscrpt_elong_fac_GreA/B_N"/>
</dbReference>
<dbReference type="InterPro" id="IPR036805">
    <property type="entry name" value="Tscrpt_elong_fac_GreA/B_N_sf"/>
</dbReference>
<dbReference type="NCBIfam" id="TIGR01462">
    <property type="entry name" value="greA"/>
    <property type="match status" value="1"/>
</dbReference>
<dbReference type="NCBIfam" id="NF001261">
    <property type="entry name" value="PRK00226.1-2"/>
    <property type="match status" value="1"/>
</dbReference>
<dbReference type="NCBIfam" id="NF001263">
    <property type="entry name" value="PRK00226.1-4"/>
    <property type="match status" value="1"/>
</dbReference>
<dbReference type="PANTHER" id="PTHR30437">
    <property type="entry name" value="TRANSCRIPTION ELONGATION FACTOR GREA"/>
    <property type="match status" value="1"/>
</dbReference>
<dbReference type="PANTHER" id="PTHR30437:SF4">
    <property type="entry name" value="TRANSCRIPTION ELONGATION FACTOR GREA"/>
    <property type="match status" value="1"/>
</dbReference>
<dbReference type="Pfam" id="PF01272">
    <property type="entry name" value="GreA_GreB"/>
    <property type="match status" value="1"/>
</dbReference>
<dbReference type="Pfam" id="PF03449">
    <property type="entry name" value="GreA_GreB_N"/>
    <property type="match status" value="1"/>
</dbReference>
<dbReference type="PIRSF" id="PIRSF006092">
    <property type="entry name" value="GreA_GreB"/>
    <property type="match status" value="1"/>
</dbReference>
<dbReference type="SUPFAM" id="SSF54534">
    <property type="entry name" value="FKBP-like"/>
    <property type="match status" value="1"/>
</dbReference>
<dbReference type="SUPFAM" id="SSF46557">
    <property type="entry name" value="GreA transcript cleavage protein, N-terminal domain"/>
    <property type="match status" value="1"/>
</dbReference>
<dbReference type="PROSITE" id="PS00829">
    <property type="entry name" value="GREAB_1"/>
    <property type="match status" value="1"/>
</dbReference>
<name>GREA_CLOP1</name>
<protein>
    <recommendedName>
        <fullName evidence="1">Transcription elongation factor GreA</fullName>
    </recommendedName>
    <alternativeName>
        <fullName evidence="1">Transcript cleavage factor GreA</fullName>
    </alternativeName>
</protein>
<feature type="chain" id="PRO_1000094167" description="Transcription elongation factor GreA">
    <location>
        <begin position="1"/>
        <end position="158"/>
    </location>
</feature>
<feature type="coiled-coil region" evidence="1">
    <location>
        <begin position="47"/>
        <end position="74"/>
    </location>
</feature>
<keyword id="KW-0175">Coiled coil</keyword>
<keyword id="KW-0238">DNA-binding</keyword>
<keyword id="KW-0804">Transcription</keyword>
<keyword id="KW-0805">Transcription regulation</keyword>